<protein>
    <recommendedName>
        <fullName evidence="1">Pyrimidine monooxygenase RutA</fullName>
        <ecNumber evidence="1">1.14.99.46</ecNumber>
    </recommendedName>
</protein>
<reference key="1">
    <citation type="journal article" date="2009" name="PLoS Genet.">
        <title>Organised genome dynamics in the Escherichia coli species results in highly diverse adaptive paths.</title>
        <authorList>
            <person name="Touchon M."/>
            <person name="Hoede C."/>
            <person name="Tenaillon O."/>
            <person name="Barbe V."/>
            <person name="Baeriswyl S."/>
            <person name="Bidet P."/>
            <person name="Bingen E."/>
            <person name="Bonacorsi S."/>
            <person name="Bouchier C."/>
            <person name="Bouvet O."/>
            <person name="Calteau A."/>
            <person name="Chiapello H."/>
            <person name="Clermont O."/>
            <person name="Cruveiller S."/>
            <person name="Danchin A."/>
            <person name="Diard M."/>
            <person name="Dossat C."/>
            <person name="Karoui M.E."/>
            <person name="Frapy E."/>
            <person name="Garry L."/>
            <person name="Ghigo J.M."/>
            <person name="Gilles A.M."/>
            <person name="Johnson J."/>
            <person name="Le Bouguenec C."/>
            <person name="Lescat M."/>
            <person name="Mangenot S."/>
            <person name="Martinez-Jehanne V."/>
            <person name="Matic I."/>
            <person name="Nassif X."/>
            <person name="Oztas S."/>
            <person name="Petit M.A."/>
            <person name="Pichon C."/>
            <person name="Rouy Z."/>
            <person name="Ruf C.S."/>
            <person name="Schneider D."/>
            <person name="Tourret J."/>
            <person name="Vacherie B."/>
            <person name="Vallenet D."/>
            <person name="Medigue C."/>
            <person name="Rocha E.P.C."/>
            <person name="Denamur E."/>
        </authorList>
    </citation>
    <scope>NUCLEOTIDE SEQUENCE [LARGE SCALE GENOMIC DNA]</scope>
    <source>
        <strain>S88 / ExPEC</strain>
    </source>
</reference>
<proteinExistence type="inferred from homology"/>
<keyword id="KW-0285">Flavoprotein</keyword>
<keyword id="KW-0288">FMN</keyword>
<keyword id="KW-0503">Monooxygenase</keyword>
<keyword id="KW-0521">NADP</keyword>
<keyword id="KW-0560">Oxidoreductase</keyword>
<keyword id="KW-1185">Reference proteome</keyword>
<accession>B7MIF9</accession>
<comment type="function">
    <text evidence="1">Catalyzes the pyrimidine ring opening between N-3 and C-4 by an unusual flavin hydroperoxide-catalyzed mechanism, adding oxygen atoms in the process to yield ureidoacrylate peracid, that immediately reacts with FMN forming ureidoacrylate and FMN-N(5)-oxide. The FMN-N(5)-oxide reacts spontaneously with NADH to produce FMN. Requires the flavin reductase RutF to regenerate FMN in vivo.</text>
</comment>
<comment type="catalytic activity">
    <reaction evidence="1">
        <text>uracil + FMNH2 + NADH + O2 = (Z)-3-ureidoacrylate + FMN + NAD(+) + H2O + H(+)</text>
        <dbReference type="Rhea" id="RHEA:31587"/>
        <dbReference type="ChEBI" id="CHEBI:15377"/>
        <dbReference type="ChEBI" id="CHEBI:15378"/>
        <dbReference type="ChEBI" id="CHEBI:15379"/>
        <dbReference type="ChEBI" id="CHEBI:17568"/>
        <dbReference type="ChEBI" id="CHEBI:57540"/>
        <dbReference type="ChEBI" id="CHEBI:57618"/>
        <dbReference type="ChEBI" id="CHEBI:57945"/>
        <dbReference type="ChEBI" id="CHEBI:58210"/>
        <dbReference type="ChEBI" id="CHEBI:59891"/>
        <dbReference type="EC" id="1.14.99.46"/>
    </reaction>
</comment>
<comment type="catalytic activity">
    <reaction evidence="1">
        <text>thymine + FMNH2 + NADH + O2 = (Z)-2-methylureidoacrylate + FMN + NAD(+) + H2O + H(+)</text>
        <dbReference type="Rhea" id="RHEA:31599"/>
        <dbReference type="ChEBI" id="CHEBI:15377"/>
        <dbReference type="ChEBI" id="CHEBI:15378"/>
        <dbReference type="ChEBI" id="CHEBI:15379"/>
        <dbReference type="ChEBI" id="CHEBI:17821"/>
        <dbReference type="ChEBI" id="CHEBI:57540"/>
        <dbReference type="ChEBI" id="CHEBI:57618"/>
        <dbReference type="ChEBI" id="CHEBI:57945"/>
        <dbReference type="ChEBI" id="CHEBI:58210"/>
        <dbReference type="ChEBI" id="CHEBI:143783"/>
        <dbReference type="EC" id="1.14.99.46"/>
    </reaction>
</comment>
<comment type="induction">
    <text evidence="1">Up-regulated by the nitrogen regulatory protein C (NtrC also called GlnG) and repressed by RutR.</text>
</comment>
<comment type="similarity">
    <text evidence="1">Belongs to the NtaA/SnaA/DszA monooxygenase family. RutA subfamily.</text>
</comment>
<dbReference type="EC" id="1.14.99.46" evidence="1"/>
<dbReference type="EMBL" id="CU928161">
    <property type="protein sequence ID" value="CAR02359.1"/>
    <property type="molecule type" value="Genomic_DNA"/>
</dbReference>
<dbReference type="SMR" id="B7MIF9"/>
<dbReference type="KEGG" id="ecz:ECS88_1028"/>
<dbReference type="HOGENOM" id="CLU_027853_1_1_6"/>
<dbReference type="Proteomes" id="UP000000747">
    <property type="component" value="Chromosome"/>
</dbReference>
<dbReference type="GO" id="GO:0008726">
    <property type="term" value="F:alkanesulfonate monooxygenase activity"/>
    <property type="evidence" value="ECO:0007669"/>
    <property type="project" value="TreeGrafter"/>
</dbReference>
<dbReference type="GO" id="GO:0052614">
    <property type="term" value="F:uracil oxygenase activity"/>
    <property type="evidence" value="ECO:0007669"/>
    <property type="project" value="UniProtKB-EC"/>
</dbReference>
<dbReference type="GO" id="GO:0046306">
    <property type="term" value="P:alkanesulfonate catabolic process"/>
    <property type="evidence" value="ECO:0007669"/>
    <property type="project" value="TreeGrafter"/>
</dbReference>
<dbReference type="GO" id="GO:0019740">
    <property type="term" value="P:nitrogen utilization"/>
    <property type="evidence" value="ECO:0007669"/>
    <property type="project" value="UniProtKB-UniRule"/>
</dbReference>
<dbReference type="GO" id="GO:0006212">
    <property type="term" value="P:uracil catabolic process"/>
    <property type="evidence" value="ECO:0007669"/>
    <property type="project" value="UniProtKB-UniRule"/>
</dbReference>
<dbReference type="CDD" id="cd01094">
    <property type="entry name" value="Alkanesulfonate_monoxygenase"/>
    <property type="match status" value="1"/>
</dbReference>
<dbReference type="FunFam" id="3.20.20.30:FF:000003">
    <property type="entry name" value="Pyrimidine monooxygenase RutA"/>
    <property type="match status" value="1"/>
</dbReference>
<dbReference type="Gene3D" id="3.20.20.30">
    <property type="entry name" value="Luciferase-like domain"/>
    <property type="match status" value="1"/>
</dbReference>
<dbReference type="HAMAP" id="MF_01699">
    <property type="entry name" value="RutA"/>
    <property type="match status" value="1"/>
</dbReference>
<dbReference type="InterPro" id="IPR011251">
    <property type="entry name" value="Luciferase-like_dom"/>
</dbReference>
<dbReference type="InterPro" id="IPR036661">
    <property type="entry name" value="Luciferase-like_sf"/>
</dbReference>
<dbReference type="InterPro" id="IPR019914">
    <property type="entry name" value="Pyrimidine_monooxygenase_RutA"/>
</dbReference>
<dbReference type="InterPro" id="IPR050172">
    <property type="entry name" value="SsuD_RutA_monooxygenase"/>
</dbReference>
<dbReference type="NCBIfam" id="TIGR03612">
    <property type="entry name" value="RutA"/>
    <property type="match status" value="1"/>
</dbReference>
<dbReference type="PANTHER" id="PTHR42847">
    <property type="entry name" value="ALKANESULFONATE MONOOXYGENASE"/>
    <property type="match status" value="1"/>
</dbReference>
<dbReference type="PANTHER" id="PTHR42847:SF4">
    <property type="entry name" value="ALKANESULFONATE MONOOXYGENASE-RELATED"/>
    <property type="match status" value="1"/>
</dbReference>
<dbReference type="Pfam" id="PF00296">
    <property type="entry name" value="Bac_luciferase"/>
    <property type="match status" value="1"/>
</dbReference>
<dbReference type="SUPFAM" id="SSF51679">
    <property type="entry name" value="Bacterial luciferase-like"/>
    <property type="match status" value="1"/>
</dbReference>
<gene>
    <name evidence="1" type="primary">rutA</name>
    <name type="ordered locus">ECS88_1028</name>
</gene>
<sequence>MQDAAPRLTFTLRDEERLMMKIGVFVPIGNNGWLISTHAPQYMPTFELNKAIVQKAEHYHFDFALSMIKLRGFGGKTEFWDHNLESFTLMAGLAAVTSRIQIYATAATLTLPPAIVARMAATIDSISGGRFGVNLVTGWQKPEYEQMGIWPGDDYFSRRYDYLTEYVQVLRDLWGSGKSDFKGDFFTMDDCRVSPQPSVPMKVICAGQSDAGMAFSARYADFNFCFGKGVNTPTAFAPTAARMKQAAEQTGRDVGSYVLFMVIADETDDAARAKWEHYKAGADEEALSWLTEQSQKDTRSGTDTNVRQMADPTSAVNINMGTLVGSYASVARMLDEVASVPGAEGVLLTFDDFLSGIENFGERIQPLMQCRAHLPALTQEVA</sequence>
<organism>
    <name type="scientific">Escherichia coli O45:K1 (strain S88 / ExPEC)</name>
    <dbReference type="NCBI Taxonomy" id="585035"/>
    <lineage>
        <taxon>Bacteria</taxon>
        <taxon>Pseudomonadati</taxon>
        <taxon>Pseudomonadota</taxon>
        <taxon>Gammaproteobacteria</taxon>
        <taxon>Enterobacterales</taxon>
        <taxon>Enterobacteriaceae</taxon>
        <taxon>Escherichia</taxon>
    </lineage>
</organism>
<feature type="chain" id="PRO_0000402616" description="Pyrimidine monooxygenase RutA">
    <location>
        <begin position="1"/>
        <end position="382"/>
    </location>
</feature>
<feature type="binding site" evidence="1">
    <location>
        <begin position="68"/>
        <end position="69"/>
    </location>
    <ligand>
        <name>FMN</name>
        <dbReference type="ChEBI" id="CHEBI:58210"/>
    </ligand>
</feature>
<feature type="binding site" evidence="1">
    <location>
        <position position="134"/>
    </location>
    <ligand>
        <name>FMN</name>
        <dbReference type="ChEBI" id="CHEBI:58210"/>
    </ligand>
</feature>
<feature type="binding site" evidence="1">
    <location>
        <position position="143"/>
    </location>
    <ligand>
        <name>FMN</name>
        <dbReference type="ChEBI" id="CHEBI:58210"/>
    </ligand>
</feature>
<feature type="binding site" evidence="1">
    <location>
        <begin position="159"/>
        <end position="160"/>
    </location>
    <ligand>
        <name>FMN</name>
        <dbReference type="ChEBI" id="CHEBI:58210"/>
    </ligand>
</feature>
<feature type="binding site" evidence="1">
    <location>
        <position position="209"/>
    </location>
    <ligand>
        <name>FMN</name>
        <dbReference type="ChEBI" id="CHEBI:58210"/>
    </ligand>
</feature>
<name>RUTA_ECO45</name>
<evidence type="ECO:0000255" key="1">
    <source>
        <dbReference type="HAMAP-Rule" id="MF_01699"/>
    </source>
</evidence>